<proteinExistence type="inferred from homology"/>
<sequence length="163" mass="18117">MKVQIKRLHPEAMIPERQTKLASGFDLHVLDAVLPENASDPYYDHFEAIRIFPGERILVRTGIAIQMGEGMEAQVRPRSGLALRHGITLLNSPGTVDADYTGDVGVILINLGDKHVDIRKKDRVAQLVFQPVFHQVELEERESLNETERGDGGFGHTGVNSQP</sequence>
<protein>
    <recommendedName>
        <fullName evidence="1">Deoxyuridine 5'-triphosphate nucleotidohydrolase</fullName>
        <shortName evidence="1">dUTPase</shortName>
        <ecNumber evidence="1">3.6.1.23</ecNumber>
    </recommendedName>
    <alternativeName>
        <fullName evidence="1">dUTP pyrophosphatase</fullName>
    </alternativeName>
</protein>
<evidence type="ECO:0000255" key="1">
    <source>
        <dbReference type="HAMAP-Rule" id="MF_00116"/>
    </source>
</evidence>
<evidence type="ECO:0000256" key="2">
    <source>
        <dbReference type="SAM" id="MobiDB-lite"/>
    </source>
</evidence>
<feature type="chain" id="PRO_1000094966" description="Deoxyuridine 5'-triphosphate nucleotidohydrolase">
    <location>
        <begin position="1"/>
        <end position="163"/>
    </location>
</feature>
<feature type="region of interest" description="Disordered" evidence="2">
    <location>
        <begin position="140"/>
        <end position="163"/>
    </location>
</feature>
<feature type="compositionally biased region" description="Basic and acidic residues" evidence="2">
    <location>
        <begin position="140"/>
        <end position="151"/>
    </location>
</feature>
<feature type="binding site" evidence="1">
    <location>
        <begin position="78"/>
        <end position="80"/>
    </location>
    <ligand>
        <name>substrate</name>
    </ligand>
</feature>
<feature type="binding site" evidence="1">
    <location>
        <position position="91"/>
    </location>
    <ligand>
        <name>substrate</name>
    </ligand>
</feature>
<feature type="binding site" evidence="1">
    <location>
        <begin position="95"/>
        <end position="97"/>
    </location>
    <ligand>
        <name>substrate</name>
    </ligand>
</feature>
<reference key="1">
    <citation type="journal article" date="2008" name="J. Bacteriol.">
        <title>The genome of Heliobacterium modesticaldum, a phototrophic representative of the Firmicutes containing the simplest photosynthetic apparatus.</title>
        <authorList>
            <person name="Sattley W.M."/>
            <person name="Madigan M.T."/>
            <person name="Swingley W.D."/>
            <person name="Cheung P.C."/>
            <person name="Clocksin K.M."/>
            <person name="Conrad A.L."/>
            <person name="Dejesa L.C."/>
            <person name="Honchak B.M."/>
            <person name="Jung D.O."/>
            <person name="Karbach L.E."/>
            <person name="Kurdoglu A."/>
            <person name="Lahiri S."/>
            <person name="Mastrian S.D."/>
            <person name="Page L.E."/>
            <person name="Taylor H.L."/>
            <person name="Wang Z.T."/>
            <person name="Raymond J."/>
            <person name="Chen M."/>
            <person name="Blankenship R.E."/>
            <person name="Touchman J.W."/>
        </authorList>
    </citation>
    <scope>NUCLEOTIDE SEQUENCE [LARGE SCALE GENOMIC DNA]</scope>
    <source>
        <strain>ATCC 51547 / Ice1</strain>
    </source>
</reference>
<organism>
    <name type="scientific">Heliobacterium modesticaldum (strain ATCC 51547 / Ice1)</name>
    <dbReference type="NCBI Taxonomy" id="498761"/>
    <lineage>
        <taxon>Bacteria</taxon>
        <taxon>Bacillati</taxon>
        <taxon>Bacillota</taxon>
        <taxon>Clostridia</taxon>
        <taxon>Eubacteriales</taxon>
        <taxon>Heliobacteriaceae</taxon>
        <taxon>Heliomicrobium</taxon>
    </lineage>
</organism>
<gene>
    <name evidence="1" type="primary">dut</name>
    <name type="ordered locus">Helmi_23970</name>
    <name type="ORF">HM1_2472</name>
</gene>
<dbReference type="EC" id="3.6.1.23" evidence="1"/>
<dbReference type="EMBL" id="CP000930">
    <property type="protein sequence ID" value="ABZ85022.1"/>
    <property type="molecule type" value="Genomic_DNA"/>
</dbReference>
<dbReference type="RefSeq" id="WP_012283518.1">
    <property type="nucleotide sequence ID" value="NC_010337.2"/>
</dbReference>
<dbReference type="SMR" id="B0TAH2"/>
<dbReference type="STRING" id="498761.HM1_2472"/>
<dbReference type="KEGG" id="hmo:HM1_2472"/>
<dbReference type="eggNOG" id="COG0756">
    <property type="taxonomic scope" value="Bacteria"/>
</dbReference>
<dbReference type="HOGENOM" id="CLU_068508_1_2_9"/>
<dbReference type="OrthoDB" id="9809956at2"/>
<dbReference type="UniPathway" id="UPA00610">
    <property type="reaction ID" value="UER00666"/>
</dbReference>
<dbReference type="Proteomes" id="UP000008550">
    <property type="component" value="Chromosome"/>
</dbReference>
<dbReference type="GO" id="GO:0004170">
    <property type="term" value="F:dUTP diphosphatase activity"/>
    <property type="evidence" value="ECO:0007669"/>
    <property type="project" value="UniProtKB-UniRule"/>
</dbReference>
<dbReference type="GO" id="GO:0000287">
    <property type="term" value="F:magnesium ion binding"/>
    <property type="evidence" value="ECO:0007669"/>
    <property type="project" value="UniProtKB-UniRule"/>
</dbReference>
<dbReference type="GO" id="GO:0006226">
    <property type="term" value="P:dUMP biosynthetic process"/>
    <property type="evidence" value="ECO:0007669"/>
    <property type="project" value="UniProtKB-UniRule"/>
</dbReference>
<dbReference type="GO" id="GO:0046081">
    <property type="term" value="P:dUTP catabolic process"/>
    <property type="evidence" value="ECO:0007669"/>
    <property type="project" value="InterPro"/>
</dbReference>
<dbReference type="CDD" id="cd07557">
    <property type="entry name" value="trimeric_dUTPase"/>
    <property type="match status" value="1"/>
</dbReference>
<dbReference type="Gene3D" id="2.70.40.10">
    <property type="match status" value="1"/>
</dbReference>
<dbReference type="HAMAP" id="MF_00116">
    <property type="entry name" value="dUTPase_bact"/>
    <property type="match status" value="1"/>
</dbReference>
<dbReference type="InterPro" id="IPR008181">
    <property type="entry name" value="dUTPase"/>
</dbReference>
<dbReference type="InterPro" id="IPR029054">
    <property type="entry name" value="dUTPase-like"/>
</dbReference>
<dbReference type="InterPro" id="IPR036157">
    <property type="entry name" value="dUTPase-like_sf"/>
</dbReference>
<dbReference type="InterPro" id="IPR033704">
    <property type="entry name" value="dUTPase_trimeric"/>
</dbReference>
<dbReference type="NCBIfam" id="TIGR00576">
    <property type="entry name" value="dut"/>
    <property type="match status" value="1"/>
</dbReference>
<dbReference type="NCBIfam" id="NF001862">
    <property type="entry name" value="PRK00601.1"/>
    <property type="match status" value="1"/>
</dbReference>
<dbReference type="PANTHER" id="PTHR11241">
    <property type="entry name" value="DEOXYURIDINE 5'-TRIPHOSPHATE NUCLEOTIDOHYDROLASE"/>
    <property type="match status" value="1"/>
</dbReference>
<dbReference type="PANTHER" id="PTHR11241:SF0">
    <property type="entry name" value="DEOXYURIDINE 5'-TRIPHOSPHATE NUCLEOTIDOHYDROLASE"/>
    <property type="match status" value="1"/>
</dbReference>
<dbReference type="Pfam" id="PF00692">
    <property type="entry name" value="dUTPase"/>
    <property type="match status" value="1"/>
</dbReference>
<dbReference type="SUPFAM" id="SSF51283">
    <property type="entry name" value="dUTPase-like"/>
    <property type="match status" value="1"/>
</dbReference>
<name>DUT_HELMI</name>
<comment type="function">
    <text evidence="1">This enzyme is involved in nucleotide metabolism: it produces dUMP, the immediate precursor of thymidine nucleotides and it decreases the intracellular concentration of dUTP so that uracil cannot be incorporated into DNA.</text>
</comment>
<comment type="catalytic activity">
    <reaction evidence="1">
        <text>dUTP + H2O = dUMP + diphosphate + H(+)</text>
        <dbReference type="Rhea" id="RHEA:10248"/>
        <dbReference type="ChEBI" id="CHEBI:15377"/>
        <dbReference type="ChEBI" id="CHEBI:15378"/>
        <dbReference type="ChEBI" id="CHEBI:33019"/>
        <dbReference type="ChEBI" id="CHEBI:61555"/>
        <dbReference type="ChEBI" id="CHEBI:246422"/>
        <dbReference type="EC" id="3.6.1.23"/>
    </reaction>
</comment>
<comment type="cofactor">
    <cofactor evidence="1">
        <name>Mg(2+)</name>
        <dbReference type="ChEBI" id="CHEBI:18420"/>
    </cofactor>
</comment>
<comment type="pathway">
    <text evidence="1">Pyrimidine metabolism; dUMP biosynthesis; dUMP from dCTP (dUTP route): step 2/2.</text>
</comment>
<comment type="similarity">
    <text evidence="1">Belongs to the dUTPase family.</text>
</comment>
<accession>B0TAH2</accession>
<keyword id="KW-0378">Hydrolase</keyword>
<keyword id="KW-0460">Magnesium</keyword>
<keyword id="KW-0479">Metal-binding</keyword>
<keyword id="KW-0546">Nucleotide metabolism</keyword>
<keyword id="KW-1185">Reference proteome</keyword>